<protein>
    <recommendedName>
        <fullName>tRNA pseudouridine synthase C</fullName>
        <ecNumber>5.4.99.26</ecNumber>
    </recommendedName>
    <alternativeName>
        <fullName>tRNA pseudouridine(65) synthase</fullName>
    </alternativeName>
    <alternativeName>
        <fullName>tRNA pseudouridylate synthase C</fullName>
    </alternativeName>
    <alternativeName>
        <fullName>tRNA-uridine isomerase C</fullName>
    </alternativeName>
</protein>
<dbReference type="EC" id="5.4.99.26"/>
<dbReference type="EMBL" id="AE004439">
    <property type="protein sequence ID" value="AAK02563.1"/>
    <property type="molecule type" value="Genomic_DNA"/>
</dbReference>
<dbReference type="RefSeq" id="WP_005721821.1">
    <property type="nucleotide sequence ID" value="NC_002663.1"/>
</dbReference>
<dbReference type="SMR" id="Q9CNF3"/>
<dbReference type="STRING" id="272843.PM0479"/>
<dbReference type="EnsemblBacteria" id="AAK02563">
    <property type="protein sequence ID" value="AAK02563"/>
    <property type="gene ID" value="PM0479"/>
</dbReference>
<dbReference type="KEGG" id="pmu:PM0479"/>
<dbReference type="HOGENOM" id="CLU_016902_11_4_6"/>
<dbReference type="OrthoDB" id="9785808at2"/>
<dbReference type="Proteomes" id="UP000000809">
    <property type="component" value="Chromosome"/>
</dbReference>
<dbReference type="GO" id="GO:0003723">
    <property type="term" value="F:RNA binding"/>
    <property type="evidence" value="ECO:0007669"/>
    <property type="project" value="InterPro"/>
</dbReference>
<dbReference type="GO" id="GO:0160149">
    <property type="term" value="F:tRNA pseudouridine(65) synthase activity"/>
    <property type="evidence" value="ECO:0007669"/>
    <property type="project" value="UniProtKB-EC"/>
</dbReference>
<dbReference type="GO" id="GO:0000455">
    <property type="term" value="P:enzyme-directed rRNA pseudouridine synthesis"/>
    <property type="evidence" value="ECO:0007669"/>
    <property type="project" value="TreeGrafter"/>
</dbReference>
<dbReference type="GO" id="GO:0008033">
    <property type="term" value="P:tRNA processing"/>
    <property type="evidence" value="ECO:0007669"/>
    <property type="project" value="UniProtKB-KW"/>
</dbReference>
<dbReference type="CDD" id="cd02563">
    <property type="entry name" value="PseudoU_synth_TruC"/>
    <property type="match status" value="1"/>
</dbReference>
<dbReference type="FunFam" id="3.30.2350.10:FF:000008">
    <property type="entry name" value="tRNA pseudouridine synthase C"/>
    <property type="match status" value="1"/>
</dbReference>
<dbReference type="Gene3D" id="3.30.2350.10">
    <property type="entry name" value="Pseudouridine synthase"/>
    <property type="match status" value="1"/>
</dbReference>
<dbReference type="InterPro" id="IPR020103">
    <property type="entry name" value="PsdUridine_synth_cat_dom_sf"/>
</dbReference>
<dbReference type="InterPro" id="IPR006224">
    <property type="entry name" value="PsdUridine_synth_RluA-like_CS"/>
</dbReference>
<dbReference type="InterPro" id="IPR006145">
    <property type="entry name" value="PsdUridine_synth_RsuA/RluA"/>
</dbReference>
<dbReference type="InterPro" id="IPR050188">
    <property type="entry name" value="RluA_PseudoU_synthase"/>
</dbReference>
<dbReference type="NCBIfam" id="NF008321">
    <property type="entry name" value="PRK11112.1"/>
    <property type="match status" value="1"/>
</dbReference>
<dbReference type="PANTHER" id="PTHR21600">
    <property type="entry name" value="MITOCHONDRIAL RNA PSEUDOURIDINE SYNTHASE"/>
    <property type="match status" value="1"/>
</dbReference>
<dbReference type="PANTHER" id="PTHR21600:SF56">
    <property type="entry name" value="TRNA PSEUDOURIDINE SYNTHASE C"/>
    <property type="match status" value="1"/>
</dbReference>
<dbReference type="Pfam" id="PF00849">
    <property type="entry name" value="PseudoU_synth_2"/>
    <property type="match status" value="1"/>
</dbReference>
<dbReference type="SUPFAM" id="SSF55120">
    <property type="entry name" value="Pseudouridine synthase"/>
    <property type="match status" value="1"/>
</dbReference>
<dbReference type="PROSITE" id="PS01129">
    <property type="entry name" value="PSI_RLU"/>
    <property type="match status" value="1"/>
</dbReference>
<reference key="1">
    <citation type="journal article" date="2001" name="Proc. Natl. Acad. Sci. U.S.A.">
        <title>Complete genomic sequence of Pasteurella multocida Pm70.</title>
        <authorList>
            <person name="May B.J."/>
            <person name="Zhang Q."/>
            <person name="Li L.L."/>
            <person name="Paustian M.L."/>
            <person name="Whittam T.S."/>
            <person name="Kapur V."/>
        </authorList>
    </citation>
    <scope>NUCLEOTIDE SEQUENCE [LARGE SCALE GENOMIC DNA]</scope>
    <source>
        <strain>Pm70</strain>
    </source>
</reference>
<accession>Q9CNF3</accession>
<comment type="function">
    <text evidence="1">Responsible for synthesis of pseudouridine from uracil-65 in transfer RNAs.</text>
</comment>
<comment type="catalytic activity">
    <reaction>
        <text>uridine(65) in tRNA = pseudouridine(65) in tRNA</text>
        <dbReference type="Rhea" id="RHEA:42536"/>
        <dbReference type="Rhea" id="RHEA-COMP:10103"/>
        <dbReference type="Rhea" id="RHEA-COMP:10104"/>
        <dbReference type="ChEBI" id="CHEBI:65314"/>
        <dbReference type="ChEBI" id="CHEBI:65315"/>
        <dbReference type="EC" id="5.4.99.26"/>
    </reaction>
</comment>
<comment type="similarity">
    <text evidence="2">Belongs to the pseudouridine synthase RluA family.</text>
</comment>
<name>TRUC_PASMU</name>
<organism>
    <name type="scientific">Pasteurella multocida (strain Pm70)</name>
    <dbReference type="NCBI Taxonomy" id="272843"/>
    <lineage>
        <taxon>Bacteria</taxon>
        <taxon>Pseudomonadati</taxon>
        <taxon>Pseudomonadota</taxon>
        <taxon>Gammaproteobacteria</taxon>
        <taxon>Pasteurellales</taxon>
        <taxon>Pasteurellaceae</taxon>
        <taxon>Pasteurella</taxon>
    </lineage>
</organism>
<feature type="chain" id="PRO_0000162716" description="tRNA pseudouridine synthase C">
    <location>
        <begin position="1"/>
        <end position="243"/>
    </location>
</feature>
<feature type="active site" evidence="1">
    <location>
        <position position="55"/>
    </location>
</feature>
<keyword id="KW-0413">Isomerase</keyword>
<keyword id="KW-1185">Reference proteome</keyword>
<keyword id="KW-0819">tRNA processing</keyword>
<proteinExistence type="inferred from homology"/>
<gene>
    <name type="primary">truC</name>
    <name type="ordered locus">PM0479</name>
</gene>
<sequence>MTLEILYQDPYLIAVNKPAGMLVHRSWLDRHETQFVMQTLRDQIGQHVYPIHRLDRPTSGVLLFALSSEVANLLCLQFENKQVQKSYLAIVRGYLVGEGRIDYPLKVQLDKIADKFAQDDKAPQEAVTDYLGLAKVEMPYCVKKYPTTRYSLVRLIPHTGRKHQLRRHMKHLFHPILGDTQYGDLHQNRALTTHTGVQRLMLHAERLIFTHPITQQQITICAGVDQQWLDLINIFDWDLNSIH</sequence>
<evidence type="ECO:0000250" key="1"/>
<evidence type="ECO:0000305" key="2"/>